<gene>
    <name type="ordered locus">FPV022</name>
</gene>
<sequence>MAYRRKSAFKRAIDEDDVDIIRKLLSYKPIDLNKPGSKNRTILCRAVSMKSHKVAEFLLSNGSKMSACKVPPLIISVRNKDLTMAKILVSYGASVDVCYKGETPLLTAIKTGYIEIIDYLLSLEPSGPYPGHDMIYDKLTLESCSLLIKNNIRLDIPDRYGHTALYYAVKKGNLSLIKLLVENKAITDNIERIKILRRCIVTHYNIEVLKILSLDRDILGTEGTTALHYAVEAERLEAVRYLLDIGCDPKVLDEHSVSPLYYAIKRKNKIILDELIKFYTVEFMVNMDKRTLPLAMYYCSIDELKNLMHGIKDIALSEDYLSELLYESIKTNNPEIVSLILGLGANINKRDLYGNIPLQTAIIYQTDNVFNLLLQKGADVNAKNSDGNTILHTLAACCKYKKIKLVLDLGSDINSVNTNGRTPIEEACPCKKTIRTLISHLIIMIKKNKELIKDPLVIRSVSFINGIEYYKNIMLQCENELNELINQKLVRGYSLFDFVIEKDYNVIARFVNHPKLKVLKQTANVYKELADKNIGMSLTRYTLLERAVLTTEPYLHMLPLEIRSIICCFLSNNELEKL</sequence>
<organism>
    <name type="scientific">Fowlpox virus (strain NVSL)</name>
    <name type="common">FPV</name>
    <dbReference type="NCBI Taxonomy" id="928301"/>
    <lineage>
        <taxon>Viruses</taxon>
        <taxon>Varidnaviria</taxon>
        <taxon>Bamfordvirae</taxon>
        <taxon>Nucleocytoviricota</taxon>
        <taxon>Pokkesviricetes</taxon>
        <taxon>Chitovirales</taxon>
        <taxon>Poxviridae</taxon>
        <taxon>Chordopoxvirinae</taxon>
        <taxon>Avipoxvirus</taxon>
        <taxon>Fowlpox virus</taxon>
    </lineage>
</organism>
<name>V022_FOWPN</name>
<keyword id="KW-0040">ANK repeat</keyword>
<keyword id="KW-1185">Reference proteome</keyword>
<keyword id="KW-0677">Repeat</keyword>
<proteinExistence type="predicted"/>
<feature type="chain" id="PRO_0000067105" description="Putative ankyrin repeat protein FPV022">
    <location>
        <begin position="1"/>
        <end position="578"/>
    </location>
</feature>
<feature type="repeat" description="ANK 1">
    <location>
        <begin position="4"/>
        <end position="34"/>
    </location>
</feature>
<feature type="repeat" description="ANK 2">
    <location>
        <begin position="38"/>
        <end position="67"/>
    </location>
</feature>
<feature type="repeat" description="ANK 3">
    <location>
        <begin position="68"/>
        <end position="97"/>
    </location>
</feature>
<feature type="repeat" description="ANK 4">
    <location>
        <begin position="100"/>
        <end position="129"/>
    </location>
</feature>
<feature type="repeat" description="ANK 5">
    <location>
        <begin position="160"/>
        <end position="189"/>
    </location>
</feature>
<feature type="repeat" description="ANK 6">
    <location>
        <begin position="222"/>
        <end position="251"/>
    </location>
</feature>
<feature type="repeat" description="ANK 7">
    <location>
        <begin position="255"/>
        <end position="287"/>
    </location>
</feature>
<feature type="repeat" description="ANK 8">
    <location>
        <begin position="320"/>
        <end position="349"/>
    </location>
</feature>
<feature type="repeat" description="ANK 9">
    <location>
        <begin position="353"/>
        <end position="382"/>
    </location>
</feature>
<feature type="repeat" description="ANK 10">
    <location>
        <begin position="386"/>
        <end position="415"/>
    </location>
</feature>
<feature type="repeat" description="ANK 11">
    <location>
        <begin position="419"/>
        <end position="449"/>
    </location>
</feature>
<protein>
    <recommendedName>
        <fullName>Putative ankyrin repeat protein FPV022</fullName>
    </recommendedName>
</protein>
<dbReference type="EMBL" id="AF198100">
    <property type="protein sequence ID" value="AAF44366.1"/>
    <property type="molecule type" value="Genomic_DNA"/>
</dbReference>
<dbReference type="RefSeq" id="NP_038985.1">
    <property type="nucleotide sequence ID" value="NC_002188.1"/>
</dbReference>
<dbReference type="SMR" id="Q9J5H9"/>
<dbReference type="GeneID" id="1486741"/>
<dbReference type="KEGG" id="vg:1486741"/>
<dbReference type="Proteomes" id="UP000008597">
    <property type="component" value="Segment"/>
</dbReference>
<dbReference type="Gene3D" id="1.25.40.20">
    <property type="entry name" value="Ankyrin repeat-containing domain"/>
    <property type="match status" value="3"/>
</dbReference>
<dbReference type="InterPro" id="IPR002110">
    <property type="entry name" value="Ankyrin_rpt"/>
</dbReference>
<dbReference type="InterPro" id="IPR036770">
    <property type="entry name" value="Ankyrin_rpt-contain_sf"/>
</dbReference>
<dbReference type="InterPro" id="IPR018272">
    <property type="entry name" value="PRANC_domain"/>
</dbReference>
<dbReference type="PANTHER" id="PTHR24198">
    <property type="entry name" value="ANKYRIN REPEAT AND PROTEIN KINASE DOMAIN-CONTAINING PROTEIN"/>
    <property type="match status" value="1"/>
</dbReference>
<dbReference type="PANTHER" id="PTHR24198:SF165">
    <property type="entry name" value="ANKYRIN REPEAT-CONTAINING PROTEIN-RELATED"/>
    <property type="match status" value="1"/>
</dbReference>
<dbReference type="Pfam" id="PF12796">
    <property type="entry name" value="Ank_2"/>
    <property type="match status" value="4"/>
</dbReference>
<dbReference type="Pfam" id="PF09372">
    <property type="entry name" value="PRANC"/>
    <property type="match status" value="1"/>
</dbReference>
<dbReference type="PRINTS" id="PR01415">
    <property type="entry name" value="ANKYRIN"/>
</dbReference>
<dbReference type="SMART" id="SM00248">
    <property type="entry name" value="ANK"/>
    <property type="match status" value="10"/>
</dbReference>
<dbReference type="SUPFAM" id="SSF48403">
    <property type="entry name" value="Ankyrin repeat"/>
    <property type="match status" value="1"/>
</dbReference>
<dbReference type="PROSITE" id="PS50297">
    <property type="entry name" value="ANK_REP_REGION"/>
    <property type="match status" value="2"/>
</dbReference>
<dbReference type="PROSITE" id="PS50088">
    <property type="entry name" value="ANK_REPEAT"/>
    <property type="match status" value="5"/>
</dbReference>
<organismHost>
    <name type="scientific">Vertebrata</name>
    <dbReference type="NCBI Taxonomy" id="7742"/>
</organismHost>
<accession>Q9J5H9</accession>
<reference key="1">
    <citation type="journal article" date="2000" name="J. Virol.">
        <title>The genome of fowlpox virus.</title>
        <authorList>
            <person name="Afonso C.L."/>
            <person name="Tulman E.R."/>
            <person name="Lu Z."/>
            <person name="Zsak L."/>
            <person name="Kutish G.F."/>
            <person name="Rock D.L."/>
        </authorList>
    </citation>
    <scope>NUCLEOTIDE SEQUENCE [LARGE SCALE GENOMIC DNA]</scope>
</reference>